<feature type="chain" id="PRO_0000108570" description="Ribosomal RNA small subunit methyltransferase H">
    <location>
        <begin position="1"/>
        <end position="310"/>
    </location>
</feature>
<feature type="binding site" evidence="1">
    <location>
        <begin position="32"/>
        <end position="34"/>
    </location>
    <ligand>
        <name>S-adenosyl-L-methionine</name>
        <dbReference type="ChEBI" id="CHEBI:59789"/>
    </ligand>
</feature>
<feature type="binding site" evidence="1">
    <location>
        <position position="52"/>
    </location>
    <ligand>
        <name>S-adenosyl-L-methionine</name>
        <dbReference type="ChEBI" id="CHEBI:59789"/>
    </ligand>
</feature>
<feature type="binding site" evidence="1">
    <location>
        <position position="79"/>
    </location>
    <ligand>
        <name>S-adenosyl-L-methionine</name>
        <dbReference type="ChEBI" id="CHEBI:59789"/>
    </ligand>
</feature>
<feature type="binding site" evidence="1">
    <location>
        <position position="100"/>
    </location>
    <ligand>
        <name>S-adenosyl-L-methionine</name>
        <dbReference type="ChEBI" id="CHEBI:59789"/>
    </ligand>
</feature>
<feature type="binding site" evidence="1">
    <location>
        <position position="107"/>
    </location>
    <ligand>
        <name>S-adenosyl-L-methionine</name>
        <dbReference type="ChEBI" id="CHEBI:59789"/>
    </ligand>
</feature>
<accession>P62468</accession>
<reference key="1">
    <citation type="journal article" date="2004" name="Nucleic Acids Res.">
        <title>The genome sequence of Bacillus cereus ATCC 10987 reveals metabolic adaptations and a large plasmid related to Bacillus anthracis pXO1.</title>
        <authorList>
            <person name="Rasko D.A."/>
            <person name="Ravel J."/>
            <person name="Oekstad O.A."/>
            <person name="Helgason E."/>
            <person name="Cer R.Z."/>
            <person name="Jiang L."/>
            <person name="Shores K.A."/>
            <person name="Fouts D.E."/>
            <person name="Tourasse N.J."/>
            <person name="Angiuoli S.V."/>
            <person name="Kolonay J.F."/>
            <person name="Nelson W.C."/>
            <person name="Kolstoe A.-B."/>
            <person name="Fraser C.M."/>
            <person name="Read T.D."/>
        </authorList>
    </citation>
    <scope>NUCLEOTIDE SEQUENCE [LARGE SCALE GENOMIC DNA]</scope>
    <source>
        <strain>ATCC 10987 / NRS 248</strain>
    </source>
</reference>
<gene>
    <name evidence="1" type="primary">rsmH</name>
    <name type="synonym">mraW</name>
    <name type="ordered locus">BCE_3964</name>
</gene>
<proteinExistence type="inferred from homology"/>
<dbReference type="EC" id="2.1.1.199" evidence="1"/>
<dbReference type="EMBL" id="AE017194">
    <property type="protein sequence ID" value="AAS42867.1"/>
    <property type="molecule type" value="Genomic_DNA"/>
</dbReference>
<dbReference type="SMR" id="P62468"/>
<dbReference type="KEGG" id="bca:BCE_3964"/>
<dbReference type="HOGENOM" id="CLU_038422_2_0_9"/>
<dbReference type="Proteomes" id="UP000002527">
    <property type="component" value="Chromosome"/>
</dbReference>
<dbReference type="GO" id="GO:0005737">
    <property type="term" value="C:cytoplasm"/>
    <property type="evidence" value="ECO:0007669"/>
    <property type="project" value="UniProtKB-SubCell"/>
</dbReference>
<dbReference type="GO" id="GO:0071424">
    <property type="term" value="F:rRNA (cytosine-N4-)-methyltransferase activity"/>
    <property type="evidence" value="ECO:0007669"/>
    <property type="project" value="UniProtKB-UniRule"/>
</dbReference>
<dbReference type="GO" id="GO:0070475">
    <property type="term" value="P:rRNA base methylation"/>
    <property type="evidence" value="ECO:0007669"/>
    <property type="project" value="UniProtKB-UniRule"/>
</dbReference>
<dbReference type="FunFam" id="1.10.150.170:FF:000001">
    <property type="entry name" value="Ribosomal RNA small subunit methyltransferase H"/>
    <property type="match status" value="1"/>
</dbReference>
<dbReference type="Gene3D" id="1.10.150.170">
    <property type="entry name" value="Putative methyltransferase TM0872, insert domain"/>
    <property type="match status" value="1"/>
</dbReference>
<dbReference type="Gene3D" id="3.40.50.150">
    <property type="entry name" value="Vaccinia Virus protein VP39"/>
    <property type="match status" value="1"/>
</dbReference>
<dbReference type="HAMAP" id="MF_01007">
    <property type="entry name" value="16SrRNA_methyltr_H"/>
    <property type="match status" value="1"/>
</dbReference>
<dbReference type="InterPro" id="IPR002903">
    <property type="entry name" value="RsmH"/>
</dbReference>
<dbReference type="InterPro" id="IPR023397">
    <property type="entry name" value="SAM-dep_MeTrfase_MraW_recog"/>
</dbReference>
<dbReference type="InterPro" id="IPR029063">
    <property type="entry name" value="SAM-dependent_MTases_sf"/>
</dbReference>
<dbReference type="NCBIfam" id="TIGR00006">
    <property type="entry name" value="16S rRNA (cytosine(1402)-N(4))-methyltransferase RsmH"/>
    <property type="match status" value="1"/>
</dbReference>
<dbReference type="PANTHER" id="PTHR11265:SF0">
    <property type="entry name" value="12S RRNA N4-METHYLCYTIDINE METHYLTRANSFERASE"/>
    <property type="match status" value="1"/>
</dbReference>
<dbReference type="PANTHER" id="PTHR11265">
    <property type="entry name" value="S-ADENOSYL-METHYLTRANSFERASE MRAW"/>
    <property type="match status" value="1"/>
</dbReference>
<dbReference type="Pfam" id="PF01795">
    <property type="entry name" value="Methyltransf_5"/>
    <property type="match status" value="1"/>
</dbReference>
<dbReference type="PIRSF" id="PIRSF004486">
    <property type="entry name" value="MraW"/>
    <property type="match status" value="1"/>
</dbReference>
<dbReference type="SUPFAM" id="SSF81799">
    <property type="entry name" value="Putative methyltransferase TM0872, insert domain"/>
    <property type="match status" value="1"/>
</dbReference>
<dbReference type="SUPFAM" id="SSF53335">
    <property type="entry name" value="S-adenosyl-L-methionine-dependent methyltransferases"/>
    <property type="match status" value="1"/>
</dbReference>
<keyword id="KW-0963">Cytoplasm</keyword>
<keyword id="KW-0489">Methyltransferase</keyword>
<keyword id="KW-0698">rRNA processing</keyword>
<keyword id="KW-0949">S-adenosyl-L-methionine</keyword>
<keyword id="KW-0808">Transferase</keyword>
<name>RSMH_BACC1</name>
<sequence>MFNHVTVLLKETVDGLDIKPGGTYVDCTLGGGGHSSYLLSQLTEGGRLIAFDQDEIAIQNAKEKFSSYGEQFITVKSNFRYLSEKLQELGITEVDGILFDLGVSSPQLDTPERGFSYHHDAPLDMRMDQDAPLTAYDVVNSWSYEQLVRIFFQYGEEKFSKQIARKIEAYRENKAIETTGELVELIKEGIPAPARRTGGHPAKRVFQAIRIAVNDELKVFEEALESAIEMVKPGGRVSVITFHSLEDRICKTTFKRNSTTPQLPPGLPIIPDEFKPKLKLITRKPILPSDIELEENNRARSAKLRIAEKR</sequence>
<comment type="function">
    <text evidence="1">Specifically methylates the N4 position of cytidine in position 1402 (C1402) of 16S rRNA.</text>
</comment>
<comment type="catalytic activity">
    <reaction evidence="1">
        <text>cytidine(1402) in 16S rRNA + S-adenosyl-L-methionine = N(4)-methylcytidine(1402) in 16S rRNA + S-adenosyl-L-homocysteine + H(+)</text>
        <dbReference type="Rhea" id="RHEA:42928"/>
        <dbReference type="Rhea" id="RHEA-COMP:10286"/>
        <dbReference type="Rhea" id="RHEA-COMP:10287"/>
        <dbReference type="ChEBI" id="CHEBI:15378"/>
        <dbReference type="ChEBI" id="CHEBI:57856"/>
        <dbReference type="ChEBI" id="CHEBI:59789"/>
        <dbReference type="ChEBI" id="CHEBI:74506"/>
        <dbReference type="ChEBI" id="CHEBI:82748"/>
        <dbReference type="EC" id="2.1.1.199"/>
    </reaction>
</comment>
<comment type="subcellular location">
    <subcellularLocation>
        <location evidence="1">Cytoplasm</location>
    </subcellularLocation>
</comment>
<comment type="similarity">
    <text evidence="1">Belongs to the methyltransferase superfamily. RsmH family.</text>
</comment>
<evidence type="ECO:0000255" key="1">
    <source>
        <dbReference type="HAMAP-Rule" id="MF_01007"/>
    </source>
</evidence>
<protein>
    <recommendedName>
        <fullName evidence="1">Ribosomal RNA small subunit methyltransferase H</fullName>
        <ecNumber evidence="1">2.1.1.199</ecNumber>
    </recommendedName>
    <alternativeName>
        <fullName evidence="1">16S rRNA m(4)C1402 methyltransferase</fullName>
    </alternativeName>
    <alternativeName>
        <fullName evidence="1">rRNA (cytosine-N(4)-)-methyltransferase RsmH</fullName>
    </alternativeName>
</protein>
<organism>
    <name type="scientific">Bacillus cereus (strain ATCC 10987 / NRS 248)</name>
    <dbReference type="NCBI Taxonomy" id="222523"/>
    <lineage>
        <taxon>Bacteria</taxon>
        <taxon>Bacillati</taxon>
        <taxon>Bacillota</taxon>
        <taxon>Bacilli</taxon>
        <taxon>Bacillales</taxon>
        <taxon>Bacillaceae</taxon>
        <taxon>Bacillus</taxon>
        <taxon>Bacillus cereus group</taxon>
    </lineage>
</organism>